<keyword id="KW-0238">DNA-binding</keyword>
<keyword id="KW-1185">Reference proteome</keyword>
<keyword id="KW-0804">Transcription</keyword>
<keyword id="KW-0805">Transcription regulation</keyword>
<organism>
    <name type="scientific">Methanoregula boonei (strain DSM 21154 / JCM 14090 / 6A8)</name>
    <dbReference type="NCBI Taxonomy" id="456442"/>
    <lineage>
        <taxon>Archaea</taxon>
        <taxon>Methanobacteriati</taxon>
        <taxon>Methanobacteriota</taxon>
        <taxon>Stenosarchaea group</taxon>
        <taxon>Methanomicrobia</taxon>
        <taxon>Methanomicrobiales</taxon>
        <taxon>Methanoregulaceae</taxon>
        <taxon>Methanoregula</taxon>
    </lineage>
</organism>
<feature type="chain" id="PRO_1000082407" description="Putative HTH-type transcriptional regulatory protein Mboo_0195">
    <location>
        <begin position="1"/>
        <end position="317"/>
    </location>
</feature>
<feature type="domain" description="HTH cro/C1-type" evidence="1">
    <location>
        <begin position="132"/>
        <end position="185"/>
    </location>
</feature>
<feature type="DNA-binding region" description="H-T-H motif" evidence="1">
    <location>
        <begin position="143"/>
        <end position="162"/>
    </location>
</feature>
<name>Y195_METB6</name>
<reference key="1">
    <citation type="journal article" date="2015" name="Microbiology">
        <title>Genome of Methanoregula boonei 6A8 reveals adaptations to oligotrophic peatland environments.</title>
        <authorList>
            <person name="Braeuer S."/>
            <person name="Cadillo-Quiroz H."/>
            <person name="Kyrpides N."/>
            <person name="Woyke T."/>
            <person name="Goodwin L."/>
            <person name="Detter C."/>
            <person name="Podell S."/>
            <person name="Yavitt J.B."/>
            <person name="Zinder S.H."/>
        </authorList>
    </citation>
    <scope>NUCLEOTIDE SEQUENCE [LARGE SCALE GENOMIC DNA]</scope>
    <source>
        <strain>DSM 21154 / JCM 14090 / 6A8</strain>
    </source>
</reference>
<protein>
    <recommendedName>
        <fullName evidence="1">Putative HTH-type transcriptional regulatory protein Mboo_0195</fullName>
    </recommendedName>
</protein>
<proteinExistence type="inferred from homology"/>
<gene>
    <name type="ordered locus">Mboo_0195</name>
</gene>
<dbReference type="EMBL" id="CP000780">
    <property type="protein sequence ID" value="ABS54718.1"/>
    <property type="molecule type" value="Genomic_DNA"/>
</dbReference>
<dbReference type="RefSeq" id="WP_011991206.1">
    <property type="nucleotide sequence ID" value="NC_009712.1"/>
</dbReference>
<dbReference type="SMR" id="A7I4Q7"/>
<dbReference type="STRING" id="456442.Mboo_0195"/>
<dbReference type="GeneID" id="5411520"/>
<dbReference type="KEGG" id="mbn:Mboo_0195"/>
<dbReference type="eggNOG" id="arCOG04152">
    <property type="taxonomic scope" value="Archaea"/>
</dbReference>
<dbReference type="HOGENOM" id="CLU_075726_0_0_2"/>
<dbReference type="OrthoDB" id="31424at2157"/>
<dbReference type="Proteomes" id="UP000002408">
    <property type="component" value="Chromosome"/>
</dbReference>
<dbReference type="GO" id="GO:0003677">
    <property type="term" value="F:DNA binding"/>
    <property type="evidence" value="ECO:0007669"/>
    <property type="project" value="UniProtKB-KW"/>
</dbReference>
<dbReference type="GO" id="GO:0003700">
    <property type="term" value="F:DNA-binding transcription factor activity"/>
    <property type="evidence" value="ECO:0007669"/>
    <property type="project" value="UniProtKB-UniRule"/>
</dbReference>
<dbReference type="CDD" id="cd00093">
    <property type="entry name" value="HTH_XRE"/>
    <property type="match status" value="1"/>
</dbReference>
<dbReference type="Gene3D" id="1.10.260.40">
    <property type="entry name" value="lambda repressor-like DNA-binding domains"/>
    <property type="match status" value="1"/>
</dbReference>
<dbReference type="HAMAP" id="MF_00584">
    <property type="entry name" value="HTH_type_cro_C1"/>
    <property type="match status" value="1"/>
</dbReference>
<dbReference type="InterPro" id="IPR020886">
    <property type="entry name" value="Arc_TR_HTH"/>
</dbReference>
<dbReference type="InterPro" id="IPR001387">
    <property type="entry name" value="Cro/C1-type_HTH"/>
</dbReference>
<dbReference type="InterPro" id="IPR010982">
    <property type="entry name" value="Lambda_DNA-bd_dom_sf"/>
</dbReference>
<dbReference type="NCBIfam" id="NF003162">
    <property type="entry name" value="PRK04140.1"/>
    <property type="match status" value="1"/>
</dbReference>
<dbReference type="Pfam" id="PF01381">
    <property type="entry name" value="HTH_3"/>
    <property type="match status" value="1"/>
</dbReference>
<dbReference type="SMART" id="SM00530">
    <property type="entry name" value="HTH_XRE"/>
    <property type="match status" value="1"/>
</dbReference>
<dbReference type="SUPFAM" id="SSF47413">
    <property type="entry name" value="lambda repressor-like DNA-binding domains"/>
    <property type="match status" value="1"/>
</dbReference>
<dbReference type="PROSITE" id="PS50943">
    <property type="entry name" value="HTH_CROC1"/>
    <property type="match status" value="1"/>
</dbReference>
<sequence>MSQDRQLQLVTSVMISAGFEVSEKFTLRPRSFDLIARNNGTLVVIKVVTHIDSVSEEAAFDLDVIAAHLGGVPLIVGERAREAELERGAVYVRYGIYAISVSTMYDYFVEKIPPLVYASPGGLYVNINGDALRELRERRSMSLGDLGQVLGVSRRTISKYESGMGTTLEVAIRIEEYFNTGVVESIDIAKREPAKSDSPTSKKPQGPGVPFGFLEELGMQLHTLRGAPFQALLTFDRHTILTGYGPAQKVVKRAALISNLSRIAKKHAMCVITDYHHEKKIGRTLVIGEERLHSIEDGFELLDLLGDIGADPSPRDS</sequence>
<accession>A7I4Q7</accession>
<evidence type="ECO:0000255" key="1">
    <source>
        <dbReference type="HAMAP-Rule" id="MF_00584"/>
    </source>
</evidence>